<proteinExistence type="inferred from homology"/>
<evidence type="ECO:0000255" key="1">
    <source>
        <dbReference type="HAMAP-Rule" id="MF_00334"/>
    </source>
</evidence>
<organism>
    <name type="scientific">Xanthomonas axonopodis pv. citri (strain 306)</name>
    <dbReference type="NCBI Taxonomy" id="190486"/>
    <lineage>
        <taxon>Bacteria</taxon>
        <taxon>Pseudomonadati</taxon>
        <taxon>Pseudomonadota</taxon>
        <taxon>Gammaproteobacteria</taxon>
        <taxon>Lysobacterales</taxon>
        <taxon>Lysobacteraceae</taxon>
        <taxon>Xanthomonas</taxon>
    </lineage>
</organism>
<comment type="function">
    <text evidence="1">Involved in the catabolism of homogentisate (2,5-dihydroxyphenylacetate or 2,5-OH-PhAc), a central intermediate in the degradation of phenylalanine and tyrosine. Catalyzes the oxidative ring cleavage of the aromatic ring of homogentisate to yield maleylacetoacetate.</text>
</comment>
<comment type="catalytic activity">
    <reaction evidence="1">
        <text>homogentisate + O2 = 4-maleylacetoacetate + H(+)</text>
        <dbReference type="Rhea" id="RHEA:15449"/>
        <dbReference type="ChEBI" id="CHEBI:15378"/>
        <dbReference type="ChEBI" id="CHEBI:15379"/>
        <dbReference type="ChEBI" id="CHEBI:16169"/>
        <dbReference type="ChEBI" id="CHEBI:17105"/>
        <dbReference type="EC" id="1.13.11.5"/>
    </reaction>
</comment>
<comment type="cofactor">
    <cofactor evidence="1">
        <name>Fe cation</name>
        <dbReference type="ChEBI" id="CHEBI:24875"/>
    </cofactor>
</comment>
<comment type="pathway">
    <text evidence="1">Amino-acid degradation; L-phenylalanine degradation; acetoacetate and fumarate from L-phenylalanine: step 4/6.</text>
</comment>
<comment type="subunit">
    <text evidence="1">Hexamer; dimer of trimers.</text>
</comment>
<comment type="similarity">
    <text evidence="1">Belongs to the homogentisate dioxygenase family.</text>
</comment>
<reference key="1">
    <citation type="journal article" date="2002" name="Nature">
        <title>Comparison of the genomes of two Xanthomonas pathogens with differing host specificities.</title>
        <authorList>
            <person name="da Silva A.C.R."/>
            <person name="Ferro J.A."/>
            <person name="Reinach F.C."/>
            <person name="Farah C.S."/>
            <person name="Furlan L.R."/>
            <person name="Quaggio R.B."/>
            <person name="Monteiro-Vitorello C.B."/>
            <person name="Van Sluys M.A."/>
            <person name="Almeida N.F. Jr."/>
            <person name="Alves L.M.C."/>
            <person name="do Amaral A.M."/>
            <person name="Bertolini M.C."/>
            <person name="Camargo L.E.A."/>
            <person name="Camarotte G."/>
            <person name="Cannavan F."/>
            <person name="Cardozo J."/>
            <person name="Chambergo F."/>
            <person name="Ciapina L.P."/>
            <person name="Cicarelli R.M.B."/>
            <person name="Coutinho L.L."/>
            <person name="Cursino-Santos J.R."/>
            <person name="El-Dorry H."/>
            <person name="Faria J.B."/>
            <person name="Ferreira A.J.S."/>
            <person name="Ferreira R.C.C."/>
            <person name="Ferro M.I.T."/>
            <person name="Formighieri E.F."/>
            <person name="Franco M.C."/>
            <person name="Greggio C.C."/>
            <person name="Gruber A."/>
            <person name="Katsuyama A.M."/>
            <person name="Kishi L.T."/>
            <person name="Leite R.P."/>
            <person name="Lemos E.G.M."/>
            <person name="Lemos M.V.F."/>
            <person name="Locali E.C."/>
            <person name="Machado M.A."/>
            <person name="Madeira A.M.B.N."/>
            <person name="Martinez-Rossi N.M."/>
            <person name="Martins E.C."/>
            <person name="Meidanis J."/>
            <person name="Menck C.F.M."/>
            <person name="Miyaki C.Y."/>
            <person name="Moon D.H."/>
            <person name="Moreira L.M."/>
            <person name="Novo M.T.M."/>
            <person name="Okura V.K."/>
            <person name="Oliveira M.C."/>
            <person name="Oliveira V.R."/>
            <person name="Pereira H.A."/>
            <person name="Rossi A."/>
            <person name="Sena J.A.D."/>
            <person name="Silva C."/>
            <person name="de Souza R.F."/>
            <person name="Spinola L.A.F."/>
            <person name="Takita M.A."/>
            <person name="Tamura R.E."/>
            <person name="Teixeira E.C."/>
            <person name="Tezza R.I.D."/>
            <person name="Trindade dos Santos M."/>
            <person name="Truffi D."/>
            <person name="Tsai S.M."/>
            <person name="White F.F."/>
            <person name="Setubal J.C."/>
            <person name="Kitajima J.P."/>
        </authorList>
    </citation>
    <scope>NUCLEOTIDE SEQUENCE [LARGE SCALE GENOMIC DNA]</scope>
    <source>
        <strain>306</strain>
    </source>
</reference>
<gene>
    <name evidence="1" type="primary">hmgA</name>
    <name type="ordered locus">XAC0454</name>
</gene>
<name>HGD_XANAC</name>
<protein>
    <recommendedName>
        <fullName evidence="1">Homogentisate 1,2-dioxygenase</fullName>
        <shortName evidence="1">HGDO</shortName>
        <ecNumber evidence="1">1.13.11.5</ecNumber>
    </recommendedName>
    <alternativeName>
        <fullName evidence="1">Homogentisate oxygenase</fullName>
    </alternativeName>
    <alternativeName>
        <fullName evidence="1">Homogentisic acid oxidase</fullName>
    </alternativeName>
    <alternativeName>
        <fullName evidence="1">Homogentisicase</fullName>
    </alternativeName>
</protein>
<feature type="chain" id="PRO_0000220257" description="Homogentisate 1,2-dioxygenase">
    <location>
        <begin position="1"/>
        <end position="458"/>
    </location>
</feature>
<feature type="active site" description="Proton acceptor" evidence="1">
    <location>
        <position position="308"/>
    </location>
</feature>
<feature type="binding site" evidence="1">
    <location>
        <position position="351"/>
    </location>
    <ligand>
        <name>Fe cation</name>
        <dbReference type="ChEBI" id="CHEBI:24875"/>
    </ligand>
</feature>
<feature type="binding site" evidence="1">
    <location>
        <position position="357"/>
    </location>
    <ligand>
        <name>Fe cation</name>
        <dbReference type="ChEBI" id="CHEBI:24875"/>
    </ligand>
</feature>
<feature type="binding site" evidence="1">
    <location>
        <position position="366"/>
    </location>
    <ligand>
        <name>homogentisate</name>
        <dbReference type="ChEBI" id="CHEBI:16169"/>
    </ligand>
</feature>
<feature type="binding site" evidence="1">
    <location>
        <position position="387"/>
    </location>
    <ligand>
        <name>Fe cation</name>
        <dbReference type="ChEBI" id="CHEBI:24875"/>
    </ligand>
</feature>
<feature type="binding site" evidence="1">
    <location>
        <position position="387"/>
    </location>
    <ligand>
        <name>homogentisate</name>
        <dbReference type="ChEBI" id="CHEBI:16169"/>
    </ligand>
</feature>
<sequence>MIQRDPNLLLSWRADQHPDAPMHNDQRYMTGFGNEFATEAVAGSLPIGQNSPQRVAHGLYAEQLSGTAFTAPRGQNRRSWLYRIRPAAVHGSFSLVEQSHFHNDFGAGPVPPDQLRWSPLPLPSVPTDFVDGLYTMAGNGGPEAMSGVGVHVYAANASMQDRFFYDADGELLLVPQQGRLRVHTELGVLALEPQQIGVIPRGMRFRVELLDAAARGYVCENFGGLLRLPDLGPIGANGLANPRDFETPHAAFEQREGTFELVAKFQGHLWRADIGHSPLDVVAWHGNYAPYRYDLRRFNTIGSISFDHPDPSIFTVLTSPSDTHGTANMDFAIFPPRWLVAQHTFRPPWFHRNVASEFMGLVHGVYDAKAEGFAPGGASLHNCMSGHGPDAATFDKASQADLTRPDVIADTMAFMFETRAVLRPTQQALSAAHRQADYQQCWSGLRAAFQPPITEDAT</sequence>
<dbReference type="EC" id="1.13.11.5" evidence="1"/>
<dbReference type="EMBL" id="AE008923">
    <property type="protein sequence ID" value="AAM35345.1"/>
    <property type="molecule type" value="Genomic_DNA"/>
</dbReference>
<dbReference type="SMR" id="Q8PQ74"/>
<dbReference type="KEGG" id="xac:XAC0454"/>
<dbReference type="eggNOG" id="COG3508">
    <property type="taxonomic scope" value="Bacteria"/>
</dbReference>
<dbReference type="HOGENOM" id="CLU_027174_0_0_6"/>
<dbReference type="UniPathway" id="UPA00139">
    <property type="reaction ID" value="UER00339"/>
</dbReference>
<dbReference type="Proteomes" id="UP000000576">
    <property type="component" value="Chromosome"/>
</dbReference>
<dbReference type="GO" id="GO:0005737">
    <property type="term" value="C:cytoplasm"/>
    <property type="evidence" value="ECO:0007669"/>
    <property type="project" value="TreeGrafter"/>
</dbReference>
<dbReference type="GO" id="GO:0004411">
    <property type="term" value="F:homogentisate 1,2-dioxygenase activity"/>
    <property type="evidence" value="ECO:0007669"/>
    <property type="project" value="UniProtKB-UniRule"/>
</dbReference>
<dbReference type="GO" id="GO:0005506">
    <property type="term" value="F:iron ion binding"/>
    <property type="evidence" value="ECO:0007669"/>
    <property type="project" value="UniProtKB-UniRule"/>
</dbReference>
<dbReference type="GO" id="GO:0006559">
    <property type="term" value="P:L-phenylalanine catabolic process"/>
    <property type="evidence" value="ECO:0007669"/>
    <property type="project" value="UniProtKB-UniRule"/>
</dbReference>
<dbReference type="GO" id="GO:0006572">
    <property type="term" value="P:tyrosine catabolic process"/>
    <property type="evidence" value="ECO:0007669"/>
    <property type="project" value="UniProtKB-UniRule"/>
</dbReference>
<dbReference type="CDD" id="cd07000">
    <property type="entry name" value="cupin_HGO_N"/>
    <property type="match status" value="1"/>
</dbReference>
<dbReference type="FunFam" id="2.60.120.10:FF:000053">
    <property type="entry name" value="Homogentisate 1,2-dioxygenase"/>
    <property type="match status" value="1"/>
</dbReference>
<dbReference type="Gene3D" id="2.60.120.10">
    <property type="entry name" value="Jelly Rolls"/>
    <property type="match status" value="1"/>
</dbReference>
<dbReference type="HAMAP" id="MF_00334">
    <property type="entry name" value="Homogentis_dioxygen"/>
    <property type="match status" value="1"/>
</dbReference>
<dbReference type="InterPro" id="IPR046451">
    <property type="entry name" value="HgmA_C"/>
</dbReference>
<dbReference type="InterPro" id="IPR046452">
    <property type="entry name" value="HgmA_N"/>
</dbReference>
<dbReference type="InterPro" id="IPR005708">
    <property type="entry name" value="Homogentis_dOase"/>
</dbReference>
<dbReference type="InterPro" id="IPR022950">
    <property type="entry name" value="Homogentis_dOase_bac"/>
</dbReference>
<dbReference type="InterPro" id="IPR014710">
    <property type="entry name" value="RmlC-like_jellyroll"/>
</dbReference>
<dbReference type="InterPro" id="IPR011051">
    <property type="entry name" value="RmlC_Cupin_sf"/>
</dbReference>
<dbReference type="NCBIfam" id="TIGR01015">
    <property type="entry name" value="hmgA"/>
    <property type="match status" value="1"/>
</dbReference>
<dbReference type="PANTHER" id="PTHR11056">
    <property type="entry name" value="HOMOGENTISATE 1,2-DIOXYGENASE"/>
    <property type="match status" value="1"/>
</dbReference>
<dbReference type="PANTHER" id="PTHR11056:SF0">
    <property type="entry name" value="HOMOGENTISATE 1,2-DIOXYGENASE"/>
    <property type="match status" value="1"/>
</dbReference>
<dbReference type="Pfam" id="PF04209">
    <property type="entry name" value="HgmA_C"/>
    <property type="match status" value="1"/>
</dbReference>
<dbReference type="Pfam" id="PF20510">
    <property type="entry name" value="HgmA_N"/>
    <property type="match status" value="1"/>
</dbReference>
<dbReference type="SUPFAM" id="SSF51182">
    <property type="entry name" value="RmlC-like cupins"/>
    <property type="match status" value="1"/>
</dbReference>
<keyword id="KW-0223">Dioxygenase</keyword>
<keyword id="KW-0408">Iron</keyword>
<keyword id="KW-0479">Metal-binding</keyword>
<keyword id="KW-0560">Oxidoreductase</keyword>
<keyword id="KW-0585">Phenylalanine catabolism</keyword>
<keyword id="KW-0828">Tyrosine catabolism</keyword>
<accession>Q8PQ74</accession>